<gene>
    <name evidence="1" type="primary">xseB</name>
    <name type="ordered locus">VS_2404</name>
</gene>
<proteinExistence type="inferred from homology"/>
<name>EX7S_VIBA3</name>
<feature type="chain" id="PRO_1000200271" description="Exodeoxyribonuclease 7 small subunit">
    <location>
        <begin position="1"/>
        <end position="80"/>
    </location>
</feature>
<keyword id="KW-0963">Cytoplasm</keyword>
<keyword id="KW-0269">Exonuclease</keyword>
<keyword id="KW-0378">Hydrolase</keyword>
<keyword id="KW-0540">Nuclease</keyword>
<comment type="function">
    <text evidence="1">Bidirectionally degrades single-stranded DNA into large acid-insoluble oligonucleotides, which are then degraded further into small acid-soluble oligonucleotides.</text>
</comment>
<comment type="catalytic activity">
    <reaction evidence="1">
        <text>Exonucleolytic cleavage in either 5'- to 3'- or 3'- to 5'-direction to yield nucleoside 5'-phosphates.</text>
        <dbReference type="EC" id="3.1.11.6"/>
    </reaction>
</comment>
<comment type="subunit">
    <text evidence="1">Heterooligomer composed of large and small subunits.</text>
</comment>
<comment type="subcellular location">
    <subcellularLocation>
        <location evidence="1">Cytoplasm</location>
    </subcellularLocation>
</comment>
<comment type="similarity">
    <text evidence="1">Belongs to the XseB family.</text>
</comment>
<dbReference type="EC" id="3.1.11.6" evidence="1"/>
<dbReference type="EMBL" id="FM954972">
    <property type="protein sequence ID" value="CAV19563.1"/>
    <property type="molecule type" value="Genomic_DNA"/>
</dbReference>
<dbReference type="SMR" id="B7VJ99"/>
<dbReference type="STRING" id="575788.VS_2404"/>
<dbReference type="KEGG" id="vsp:VS_2404"/>
<dbReference type="PATRIC" id="fig|575788.5.peg.3666"/>
<dbReference type="eggNOG" id="COG1722">
    <property type="taxonomic scope" value="Bacteria"/>
</dbReference>
<dbReference type="HOGENOM" id="CLU_145918_3_3_6"/>
<dbReference type="Proteomes" id="UP000009100">
    <property type="component" value="Chromosome 1"/>
</dbReference>
<dbReference type="GO" id="GO:0005829">
    <property type="term" value="C:cytosol"/>
    <property type="evidence" value="ECO:0007669"/>
    <property type="project" value="TreeGrafter"/>
</dbReference>
<dbReference type="GO" id="GO:0009318">
    <property type="term" value="C:exodeoxyribonuclease VII complex"/>
    <property type="evidence" value="ECO:0007669"/>
    <property type="project" value="InterPro"/>
</dbReference>
<dbReference type="GO" id="GO:0008855">
    <property type="term" value="F:exodeoxyribonuclease VII activity"/>
    <property type="evidence" value="ECO:0007669"/>
    <property type="project" value="UniProtKB-UniRule"/>
</dbReference>
<dbReference type="GO" id="GO:0006308">
    <property type="term" value="P:DNA catabolic process"/>
    <property type="evidence" value="ECO:0007669"/>
    <property type="project" value="UniProtKB-UniRule"/>
</dbReference>
<dbReference type="Gene3D" id="1.10.287.1040">
    <property type="entry name" value="Exonuclease VII, small subunit"/>
    <property type="match status" value="1"/>
</dbReference>
<dbReference type="HAMAP" id="MF_00337">
    <property type="entry name" value="Exonuc_7_S"/>
    <property type="match status" value="1"/>
</dbReference>
<dbReference type="InterPro" id="IPR003761">
    <property type="entry name" value="Exonuc_VII_S"/>
</dbReference>
<dbReference type="InterPro" id="IPR037004">
    <property type="entry name" value="Exonuc_VII_ssu_sf"/>
</dbReference>
<dbReference type="NCBIfam" id="NF002137">
    <property type="entry name" value="PRK00977.1-1"/>
    <property type="match status" value="1"/>
</dbReference>
<dbReference type="NCBIfam" id="NF002140">
    <property type="entry name" value="PRK00977.1-4"/>
    <property type="match status" value="1"/>
</dbReference>
<dbReference type="NCBIfam" id="TIGR01280">
    <property type="entry name" value="xseB"/>
    <property type="match status" value="1"/>
</dbReference>
<dbReference type="PANTHER" id="PTHR34137">
    <property type="entry name" value="EXODEOXYRIBONUCLEASE 7 SMALL SUBUNIT"/>
    <property type="match status" value="1"/>
</dbReference>
<dbReference type="PANTHER" id="PTHR34137:SF1">
    <property type="entry name" value="EXODEOXYRIBONUCLEASE 7 SMALL SUBUNIT"/>
    <property type="match status" value="1"/>
</dbReference>
<dbReference type="Pfam" id="PF02609">
    <property type="entry name" value="Exonuc_VII_S"/>
    <property type="match status" value="1"/>
</dbReference>
<dbReference type="PIRSF" id="PIRSF006488">
    <property type="entry name" value="Exonuc_VII_S"/>
    <property type="match status" value="1"/>
</dbReference>
<dbReference type="SUPFAM" id="SSF116842">
    <property type="entry name" value="XseB-like"/>
    <property type="match status" value="1"/>
</dbReference>
<accession>B7VJ99</accession>
<organism>
    <name type="scientific">Vibrio atlanticus (strain LGP32)</name>
    <name type="common">Vibrio splendidus (strain Mel32)</name>
    <dbReference type="NCBI Taxonomy" id="575788"/>
    <lineage>
        <taxon>Bacteria</taxon>
        <taxon>Pseudomonadati</taxon>
        <taxon>Pseudomonadota</taxon>
        <taxon>Gammaproteobacteria</taxon>
        <taxon>Vibrionales</taxon>
        <taxon>Vibrionaceae</taxon>
        <taxon>Vibrio</taxon>
    </lineage>
</organism>
<sequence>MATKKPENMSFEAAIEELDGLVDQLENGDLALDDALKKFERGISLARAGQSKLNDAEQRVSILLKNDENAELSDFNPQPE</sequence>
<protein>
    <recommendedName>
        <fullName evidence="1">Exodeoxyribonuclease 7 small subunit</fullName>
        <ecNumber evidence="1">3.1.11.6</ecNumber>
    </recommendedName>
    <alternativeName>
        <fullName evidence="1">Exodeoxyribonuclease VII small subunit</fullName>
        <shortName evidence="1">Exonuclease VII small subunit</shortName>
    </alternativeName>
</protein>
<reference key="1">
    <citation type="submission" date="2009-02" db="EMBL/GenBank/DDBJ databases">
        <title>Vibrio splendidus str. LGP32 complete genome.</title>
        <authorList>
            <person name="Mazel D."/>
            <person name="Le Roux F."/>
        </authorList>
    </citation>
    <scope>NUCLEOTIDE SEQUENCE [LARGE SCALE GENOMIC DNA]</scope>
    <source>
        <strain>LGP32</strain>
    </source>
</reference>
<evidence type="ECO:0000255" key="1">
    <source>
        <dbReference type="HAMAP-Rule" id="MF_00337"/>
    </source>
</evidence>